<feature type="chain" id="PRO_0000310309" description="Uncharacterized oxidoreductase C8E4.04">
    <location>
        <begin position="1"/>
        <end position="325"/>
    </location>
</feature>
<feature type="active site" description="Proton donor" evidence="1">
    <location>
        <position position="59"/>
    </location>
</feature>
<feature type="binding site" evidence="1">
    <location>
        <position position="117"/>
    </location>
    <ligand>
        <name>substrate</name>
    </ligand>
</feature>
<feature type="site" description="Lowers pKa of active site Tyr" evidence="1">
    <location>
        <position position="84"/>
    </location>
</feature>
<protein>
    <recommendedName>
        <fullName>Uncharacterized oxidoreductase C8E4.04</fullName>
        <ecNumber>1.-.-.-</ecNumber>
    </recommendedName>
</protein>
<keyword id="KW-0963">Cytoplasm</keyword>
<keyword id="KW-0539">Nucleus</keyword>
<keyword id="KW-0560">Oxidoreductase</keyword>
<keyword id="KW-1185">Reference proteome</keyword>
<sequence length="325" mass="36629">MSIKEFAKNAREAYFTLPNGDKIPSIGLGTWRSGKDETKNAVCAALKAGYRHIDTAHIYGNEKEIGEGIRESGVPRTDIWVTSKLWCNAHRAGLVPLALEKTLQDLNLEYIDAYLIHWPFALLSGPEELPRNEKGELIYEDVPIEETWQAMEELLETGKVRYIGISNFNNEYLDRVLKIAKVKPTIHQMELHPYLPQTEYLEKHKKLQIHVSAYSPLANQNDAYNSDISKLIEHKTLVDIANARGEGITPANIAISWAVKRGTSVLPKSVNESRIVSNFLYIPLTDKEMEAINNIGVVRRFSHGKFAPKPMFVGLQDGTPKQTHA</sequence>
<evidence type="ECO:0000250" key="1"/>
<evidence type="ECO:0000269" key="2">
    <source>
    </source>
</evidence>
<evidence type="ECO:0000305" key="3"/>
<proteinExistence type="inferred from homology"/>
<gene>
    <name type="ORF">SPBC8E4.04</name>
</gene>
<comment type="subcellular location">
    <subcellularLocation>
        <location evidence="2">Cytoplasm</location>
    </subcellularLocation>
    <subcellularLocation>
        <location evidence="2">Nucleus</location>
    </subcellularLocation>
</comment>
<comment type="similarity">
    <text evidence="3">Belongs to the aldo/keto reductase family.</text>
</comment>
<reference key="1">
    <citation type="journal article" date="2002" name="Nature">
        <title>The genome sequence of Schizosaccharomyces pombe.</title>
        <authorList>
            <person name="Wood V."/>
            <person name="Gwilliam R."/>
            <person name="Rajandream M.A."/>
            <person name="Lyne M.H."/>
            <person name="Lyne R."/>
            <person name="Stewart A."/>
            <person name="Sgouros J.G."/>
            <person name="Peat N."/>
            <person name="Hayles J."/>
            <person name="Baker S.G."/>
            <person name="Basham D."/>
            <person name="Bowman S."/>
            <person name="Brooks K."/>
            <person name="Brown D."/>
            <person name="Brown S."/>
            <person name="Chillingworth T."/>
            <person name="Churcher C.M."/>
            <person name="Collins M."/>
            <person name="Connor R."/>
            <person name="Cronin A."/>
            <person name="Davis P."/>
            <person name="Feltwell T."/>
            <person name="Fraser A."/>
            <person name="Gentles S."/>
            <person name="Goble A."/>
            <person name="Hamlin N."/>
            <person name="Harris D.E."/>
            <person name="Hidalgo J."/>
            <person name="Hodgson G."/>
            <person name="Holroyd S."/>
            <person name="Hornsby T."/>
            <person name="Howarth S."/>
            <person name="Huckle E.J."/>
            <person name="Hunt S."/>
            <person name="Jagels K."/>
            <person name="James K.D."/>
            <person name="Jones L."/>
            <person name="Jones M."/>
            <person name="Leather S."/>
            <person name="McDonald S."/>
            <person name="McLean J."/>
            <person name="Mooney P."/>
            <person name="Moule S."/>
            <person name="Mungall K.L."/>
            <person name="Murphy L.D."/>
            <person name="Niblett D."/>
            <person name="Odell C."/>
            <person name="Oliver K."/>
            <person name="O'Neil S."/>
            <person name="Pearson D."/>
            <person name="Quail M.A."/>
            <person name="Rabbinowitsch E."/>
            <person name="Rutherford K.M."/>
            <person name="Rutter S."/>
            <person name="Saunders D."/>
            <person name="Seeger K."/>
            <person name="Sharp S."/>
            <person name="Skelton J."/>
            <person name="Simmonds M.N."/>
            <person name="Squares R."/>
            <person name="Squares S."/>
            <person name="Stevens K."/>
            <person name="Taylor K."/>
            <person name="Taylor R.G."/>
            <person name="Tivey A."/>
            <person name="Walsh S.V."/>
            <person name="Warren T."/>
            <person name="Whitehead S."/>
            <person name="Woodward J.R."/>
            <person name="Volckaert G."/>
            <person name="Aert R."/>
            <person name="Robben J."/>
            <person name="Grymonprez B."/>
            <person name="Weltjens I."/>
            <person name="Vanstreels E."/>
            <person name="Rieger M."/>
            <person name="Schaefer M."/>
            <person name="Mueller-Auer S."/>
            <person name="Gabel C."/>
            <person name="Fuchs M."/>
            <person name="Duesterhoeft A."/>
            <person name="Fritzc C."/>
            <person name="Holzer E."/>
            <person name="Moestl D."/>
            <person name="Hilbert H."/>
            <person name="Borzym K."/>
            <person name="Langer I."/>
            <person name="Beck A."/>
            <person name="Lehrach H."/>
            <person name="Reinhardt R."/>
            <person name="Pohl T.M."/>
            <person name="Eger P."/>
            <person name="Zimmermann W."/>
            <person name="Wedler H."/>
            <person name="Wambutt R."/>
            <person name="Purnelle B."/>
            <person name="Goffeau A."/>
            <person name="Cadieu E."/>
            <person name="Dreano S."/>
            <person name="Gloux S."/>
            <person name="Lelaure V."/>
            <person name="Mottier S."/>
            <person name="Galibert F."/>
            <person name="Aves S.J."/>
            <person name="Xiang Z."/>
            <person name="Hunt C."/>
            <person name="Moore K."/>
            <person name="Hurst S.M."/>
            <person name="Lucas M."/>
            <person name="Rochet M."/>
            <person name="Gaillardin C."/>
            <person name="Tallada V.A."/>
            <person name="Garzon A."/>
            <person name="Thode G."/>
            <person name="Daga R.R."/>
            <person name="Cruzado L."/>
            <person name="Jimenez J."/>
            <person name="Sanchez M."/>
            <person name="del Rey F."/>
            <person name="Benito J."/>
            <person name="Dominguez A."/>
            <person name="Revuelta J.L."/>
            <person name="Moreno S."/>
            <person name="Armstrong J."/>
            <person name="Forsburg S.L."/>
            <person name="Cerutti L."/>
            <person name="Lowe T."/>
            <person name="McCombie W.R."/>
            <person name="Paulsen I."/>
            <person name="Potashkin J."/>
            <person name="Shpakovski G.V."/>
            <person name="Ussery D."/>
            <person name="Barrell B.G."/>
            <person name="Nurse P."/>
        </authorList>
    </citation>
    <scope>NUCLEOTIDE SEQUENCE [LARGE SCALE GENOMIC DNA]</scope>
    <source>
        <strain>972 / ATCC 24843</strain>
    </source>
</reference>
<reference key="2">
    <citation type="journal article" date="2006" name="Nat. Biotechnol.">
        <title>ORFeome cloning and global analysis of protein localization in the fission yeast Schizosaccharomyces pombe.</title>
        <authorList>
            <person name="Matsuyama A."/>
            <person name="Arai R."/>
            <person name="Yashiroda Y."/>
            <person name="Shirai A."/>
            <person name="Kamata A."/>
            <person name="Sekido S."/>
            <person name="Kobayashi Y."/>
            <person name="Hashimoto A."/>
            <person name="Hamamoto M."/>
            <person name="Hiraoka Y."/>
            <person name="Horinouchi S."/>
            <person name="Yoshida M."/>
        </authorList>
    </citation>
    <scope>SUBCELLULAR LOCATION [LARGE SCALE ANALYSIS]</scope>
</reference>
<organism>
    <name type="scientific">Schizosaccharomyces pombe (strain 972 / ATCC 24843)</name>
    <name type="common">Fission yeast</name>
    <dbReference type="NCBI Taxonomy" id="284812"/>
    <lineage>
        <taxon>Eukaryota</taxon>
        <taxon>Fungi</taxon>
        <taxon>Dikarya</taxon>
        <taxon>Ascomycota</taxon>
        <taxon>Taphrinomycotina</taxon>
        <taxon>Schizosaccharomycetes</taxon>
        <taxon>Schizosaccharomycetales</taxon>
        <taxon>Schizosaccharomycetaceae</taxon>
        <taxon>Schizosaccharomyces</taxon>
    </lineage>
</organism>
<accession>O42888</accession>
<dbReference type="EC" id="1.-.-.-"/>
<dbReference type="EMBL" id="CU329671">
    <property type="protein sequence ID" value="CAA16997.1"/>
    <property type="molecule type" value="Genomic_DNA"/>
</dbReference>
<dbReference type="PIR" id="T50378">
    <property type="entry name" value="T39169"/>
</dbReference>
<dbReference type="RefSeq" id="NP_596843.1">
    <property type="nucleotide sequence ID" value="NM_001023865.2"/>
</dbReference>
<dbReference type="SMR" id="O42888"/>
<dbReference type="FunCoup" id="O42888">
    <property type="interactions" value="412"/>
</dbReference>
<dbReference type="STRING" id="284812.O42888"/>
<dbReference type="iPTMnet" id="O42888"/>
<dbReference type="PaxDb" id="4896-SPBC8E4.04.1"/>
<dbReference type="EnsemblFungi" id="SPBC8E4.04.1">
    <property type="protein sequence ID" value="SPBC8E4.04.1:pep"/>
    <property type="gene ID" value="SPBC8E4.04"/>
</dbReference>
<dbReference type="KEGG" id="spo:2541256"/>
<dbReference type="PomBase" id="SPBC8E4.04"/>
<dbReference type="VEuPathDB" id="FungiDB:SPBC8E4.04"/>
<dbReference type="eggNOG" id="KOG1577">
    <property type="taxonomic scope" value="Eukaryota"/>
</dbReference>
<dbReference type="HOGENOM" id="CLU_023205_0_0_1"/>
<dbReference type="InParanoid" id="O42888"/>
<dbReference type="PhylomeDB" id="O42888"/>
<dbReference type="Reactome" id="R-SPO-156590">
    <property type="pathway name" value="Glutathione conjugation"/>
</dbReference>
<dbReference type="Reactome" id="R-SPO-193144">
    <property type="pathway name" value="Estrogen biosynthesis"/>
</dbReference>
<dbReference type="Reactome" id="R-SPO-193368">
    <property type="pathway name" value="Synthesis of bile acids and bile salts via 7alpha-hydroxycholesterol"/>
</dbReference>
<dbReference type="Reactome" id="R-SPO-193775">
    <property type="pathway name" value="Synthesis of bile acids and bile salts via 24-hydroxycholesterol"/>
</dbReference>
<dbReference type="Reactome" id="R-SPO-193807">
    <property type="pathway name" value="Synthesis of bile acids and bile salts via 27-hydroxycholesterol"/>
</dbReference>
<dbReference type="Reactome" id="R-SPO-2162123">
    <property type="pathway name" value="Synthesis of Prostaglandins (PG) and Thromboxanes (TX)"/>
</dbReference>
<dbReference type="Reactome" id="R-SPO-5365859">
    <property type="pathway name" value="RA biosynthesis pathway"/>
</dbReference>
<dbReference type="Reactome" id="R-SPO-5661270">
    <property type="pathway name" value="Formation of xylulose-5-phosphate"/>
</dbReference>
<dbReference type="Reactome" id="R-SPO-9757110">
    <property type="pathway name" value="Prednisone ADME"/>
</dbReference>
<dbReference type="PRO" id="PR:O42888"/>
<dbReference type="Proteomes" id="UP000002485">
    <property type="component" value="Chromosome II"/>
</dbReference>
<dbReference type="GO" id="GO:0005829">
    <property type="term" value="C:cytosol"/>
    <property type="evidence" value="ECO:0007005"/>
    <property type="project" value="PomBase"/>
</dbReference>
<dbReference type="GO" id="GO:0005634">
    <property type="term" value="C:nucleus"/>
    <property type="evidence" value="ECO:0007005"/>
    <property type="project" value="PomBase"/>
</dbReference>
<dbReference type="GO" id="GO:0004032">
    <property type="term" value="F:aldose reductase (NADPH) activity"/>
    <property type="evidence" value="ECO:0000318"/>
    <property type="project" value="GO_Central"/>
</dbReference>
<dbReference type="GO" id="GO:0110095">
    <property type="term" value="P:cellular detoxification of aldehyde"/>
    <property type="evidence" value="ECO:0000250"/>
    <property type="project" value="PomBase"/>
</dbReference>
<dbReference type="FunFam" id="3.20.20.100:FF:000036">
    <property type="entry name" value="NADP-dependent oxidoreductase domain-containing protein"/>
    <property type="match status" value="1"/>
</dbReference>
<dbReference type="Gene3D" id="3.20.20.100">
    <property type="entry name" value="NADP-dependent oxidoreductase domain"/>
    <property type="match status" value="1"/>
</dbReference>
<dbReference type="InterPro" id="IPR020471">
    <property type="entry name" value="AKR"/>
</dbReference>
<dbReference type="InterPro" id="IPR018170">
    <property type="entry name" value="Aldo/ket_reductase_CS"/>
</dbReference>
<dbReference type="InterPro" id="IPR023210">
    <property type="entry name" value="NADP_OxRdtase_dom"/>
</dbReference>
<dbReference type="InterPro" id="IPR036812">
    <property type="entry name" value="NADP_OxRdtase_dom_sf"/>
</dbReference>
<dbReference type="PANTHER" id="PTHR11732">
    <property type="entry name" value="ALDO/KETO REDUCTASE"/>
    <property type="match status" value="1"/>
</dbReference>
<dbReference type="Pfam" id="PF00248">
    <property type="entry name" value="Aldo_ket_red"/>
    <property type="match status" value="1"/>
</dbReference>
<dbReference type="PIRSF" id="PIRSF000097">
    <property type="entry name" value="AKR"/>
    <property type="match status" value="1"/>
</dbReference>
<dbReference type="PRINTS" id="PR00069">
    <property type="entry name" value="ALDKETRDTASE"/>
</dbReference>
<dbReference type="SUPFAM" id="SSF51430">
    <property type="entry name" value="NAD(P)-linked oxidoreductase"/>
    <property type="match status" value="1"/>
</dbReference>
<dbReference type="PROSITE" id="PS00798">
    <property type="entry name" value="ALDOKETO_REDUCTASE_1"/>
    <property type="match status" value="1"/>
</dbReference>
<dbReference type="PROSITE" id="PS00062">
    <property type="entry name" value="ALDOKETO_REDUCTASE_2"/>
    <property type="match status" value="1"/>
</dbReference>
<name>YBN4_SCHPO</name>